<sequence>MFQDNPLLAQLKQQLHSQTPRVEGVVKGTEKGFGFLEVDGQKSYFIPPPYMKKVMHGDRVSATLHTEKEREIAEPETLIEPFLSRFVGRVQKRDDRLSIVPDHPLLKDAIQCRPVRGLNHNFQAGDWAVAEMCRHPLKGDRGFNADLTQFITDGEDHLAPWWVTLARHNLEKEAPEMIAISEPDASLPREDLTALNFVTIDSASTEDMDDALFVQDNGDGSLQLTIAIADPTAYVEQGSPLDEIARKRAFTNYLPGFNIPMLPRDLSDNLCSLRPNQRRPVLACRVTIGADGALADDIRFFAAEIESKAKLVYDEVSDWLEGIAGWQPPSDDIAQQITLLKRVCDVRNSWRHQHALVFKDRPDYRFVLGEKGEVLEIVTEQRRTANRIVEECMIASNVCAAIVLRDRLGFGIYNVHTGFDPLLVEQAVTVLQANGVEADAEKLLTLDGFCELRRHLDSQPTQFLDSRIRRSQTYAEISTTPGPHYGLGLEAYATWTSPIRKYGDMVNHRLLKAIIAEQPAEKPQDEVTVQLAERRRLNRMAERDVGDWLYARYLKDKAGTDERFNAEIIDVTRGGLRVRLLDNGAVAFIPAPFIHAVRDEMVCSQETGTVQIKGEVVYRQGDNLQVTIAEVRMETRSVIARPAA</sequence>
<accession>A8GF49</accession>
<reference key="1">
    <citation type="submission" date="2007-09" db="EMBL/GenBank/DDBJ databases">
        <title>Complete sequence of chromosome of Serratia proteamaculans 568.</title>
        <authorList>
            <consortium name="US DOE Joint Genome Institute"/>
            <person name="Copeland A."/>
            <person name="Lucas S."/>
            <person name="Lapidus A."/>
            <person name="Barry K."/>
            <person name="Glavina del Rio T."/>
            <person name="Dalin E."/>
            <person name="Tice H."/>
            <person name="Pitluck S."/>
            <person name="Chain P."/>
            <person name="Malfatti S."/>
            <person name="Shin M."/>
            <person name="Vergez L."/>
            <person name="Schmutz J."/>
            <person name="Larimer F."/>
            <person name="Land M."/>
            <person name="Hauser L."/>
            <person name="Kyrpides N."/>
            <person name="Kim E."/>
            <person name="Taghavi S."/>
            <person name="Newman L."/>
            <person name="Vangronsveld J."/>
            <person name="van der Lelie D."/>
            <person name="Richardson P."/>
        </authorList>
    </citation>
    <scope>NUCLEOTIDE SEQUENCE [LARGE SCALE GENOMIC DNA]</scope>
    <source>
        <strain>568</strain>
    </source>
</reference>
<evidence type="ECO:0000255" key="1"/>
<evidence type="ECO:0000255" key="2">
    <source>
        <dbReference type="HAMAP-Rule" id="MF_01036"/>
    </source>
</evidence>
<name>RNB_SERP5</name>
<organism>
    <name type="scientific">Serratia proteamaculans (strain 568)</name>
    <dbReference type="NCBI Taxonomy" id="399741"/>
    <lineage>
        <taxon>Bacteria</taxon>
        <taxon>Pseudomonadati</taxon>
        <taxon>Pseudomonadota</taxon>
        <taxon>Gammaproteobacteria</taxon>
        <taxon>Enterobacterales</taxon>
        <taxon>Yersiniaceae</taxon>
        <taxon>Serratia</taxon>
    </lineage>
</organism>
<proteinExistence type="inferred from homology"/>
<protein>
    <recommendedName>
        <fullName evidence="2">Exoribonuclease 2</fullName>
        <ecNumber evidence="2">3.1.13.1</ecNumber>
    </recommendedName>
    <alternativeName>
        <fullName evidence="2">Exoribonuclease II</fullName>
        <shortName evidence="2">RNase II</shortName>
        <shortName evidence="2">Ribonuclease II</shortName>
    </alternativeName>
</protein>
<feature type="chain" id="PRO_1000063897" description="Exoribonuclease 2">
    <location>
        <begin position="1"/>
        <end position="644"/>
    </location>
</feature>
<feature type="domain" description="RNB" evidence="1">
    <location>
        <begin position="189"/>
        <end position="516"/>
    </location>
</feature>
<feature type="domain" description="S1 motif" evidence="2">
    <location>
        <begin position="561"/>
        <end position="643"/>
    </location>
</feature>
<dbReference type="EC" id="3.1.13.1" evidence="2"/>
<dbReference type="EMBL" id="CP000826">
    <property type="protein sequence ID" value="ABV41739.1"/>
    <property type="molecule type" value="Genomic_DNA"/>
</dbReference>
<dbReference type="SMR" id="A8GF49"/>
<dbReference type="STRING" id="399741.Spro_2638"/>
<dbReference type="KEGG" id="spe:Spro_2638"/>
<dbReference type="eggNOG" id="COG4776">
    <property type="taxonomic scope" value="Bacteria"/>
</dbReference>
<dbReference type="HOGENOM" id="CLU_002333_7_3_6"/>
<dbReference type="OrthoDB" id="9764149at2"/>
<dbReference type="GO" id="GO:0005829">
    <property type="term" value="C:cytosol"/>
    <property type="evidence" value="ECO:0007669"/>
    <property type="project" value="TreeGrafter"/>
</dbReference>
<dbReference type="GO" id="GO:0008859">
    <property type="term" value="F:exoribonuclease II activity"/>
    <property type="evidence" value="ECO:0007669"/>
    <property type="project" value="UniProtKB-UniRule"/>
</dbReference>
<dbReference type="GO" id="GO:0003723">
    <property type="term" value="F:RNA binding"/>
    <property type="evidence" value="ECO:0007669"/>
    <property type="project" value="UniProtKB-KW"/>
</dbReference>
<dbReference type="GO" id="GO:0006402">
    <property type="term" value="P:mRNA catabolic process"/>
    <property type="evidence" value="ECO:0007669"/>
    <property type="project" value="UniProtKB-UniRule"/>
</dbReference>
<dbReference type="FunFam" id="2.40.50.140:FF:000079">
    <property type="entry name" value="Exoribonuclease 2"/>
    <property type="match status" value="1"/>
</dbReference>
<dbReference type="Gene3D" id="2.40.50.640">
    <property type="match status" value="1"/>
</dbReference>
<dbReference type="Gene3D" id="2.40.50.140">
    <property type="entry name" value="Nucleic acid-binding proteins"/>
    <property type="match status" value="2"/>
</dbReference>
<dbReference type="HAMAP" id="MF_01036">
    <property type="entry name" value="RNase_II"/>
    <property type="match status" value="1"/>
</dbReference>
<dbReference type="InterPro" id="IPR011129">
    <property type="entry name" value="CSD"/>
</dbReference>
<dbReference type="InterPro" id="IPR012340">
    <property type="entry name" value="NA-bd_OB-fold"/>
</dbReference>
<dbReference type="InterPro" id="IPR013223">
    <property type="entry name" value="RNase_B_OB_dom"/>
</dbReference>
<dbReference type="InterPro" id="IPR011804">
    <property type="entry name" value="RNase_II"/>
</dbReference>
<dbReference type="InterPro" id="IPR001900">
    <property type="entry name" value="RNase_II/R"/>
</dbReference>
<dbReference type="InterPro" id="IPR022966">
    <property type="entry name" value="RNase_II/R_CS"/>
</dbReference>
<dbReference type="InterPro" id="IPR004476">
    <property type="entry name" value="RNase_II/RNase_R"/>
</dbReference>
<dbReference type="InterPro" id="IPR050180">
    <property type="entry name" value="RNR_Ribonuclease"/>
</dbReference>
<dbReference type="InterPro" id="IPR003029">
    <property type="entry name" value="S1_domain"/>
</dbReference>
<dbReference type="NCBIfam" id="TIGR00358">
    <property type="entry name" value="3_prime_RNase"/>
    <property type="match status" value="1"/>
</dbReference>
<dbReference type="NCBIfam" id="NF003455">
    <property type="entry name" value="PRK05054.1"/>
    <property type="match status" value="1"/>
</dbReference>
<dbReference type="NCBIfam" id="TIGR02062">
    <property type="entry name" value="RNase_B"/>
    <property type="match status" value="1"/>
</dbReference>
<dbReference type="PANTHER" id="PTHR23355:SF37">
    <property type="entry name" value="EXORIBONUCLEASE 2"/>
    <property type="match status" value="1"/>
</dbReference>
<dbReference type="PANTHER" id="PTHR23355">
    <property type="entry name" value="RIBONUCLEASE"/>
    <property type="match status" value="1"/>
</dbReference>
<dbReference type="Pfam" id="PF08206">
    <property type="entry name" value="OB_RNB"/>
    <property type="match status" value="1"/>
</dbReference>
<dbReference type="Pfam" id="PF00773">
    <property type="entry name" value="RNB"/>
    <property type="match status" value="1"/>
</dbReference>
<dbReference type="Pfam" id="PF00575">
    <property type="entry name" value="S1"/>
    <property type="match status" value="1"/>
</dbReference>
<dbReference type="SMART" id="SM00357">
    <property type="entry name" value="CSP"/>
    <property type="match status" value="1"/>
</dbReference>
<dbReference type="SMART" id="SM00955">
    <property type="entry name" value="RNB"/>
    <property type="match status" value="1"/>
</dbReference>
<dbReference type="SUPFAM" id="SSF50249">
    <property type="entry name" value="Nucleic acid-binding proteins"/>
    <property type="match status" value="4"/>
</dbReference>
<dbReference type="PROSITE" id="PS01175">
    <property type="entry name" value="RIBONUCLEASE_II"/>
    <property type="match status" value="1"/>
</dbReference>
<keyword id="KW-0963">Cytoplasm</keyword>
<keyword id="KW-0269">Exonuclease</keyword>
<keyword id="KW-0378">Hydrolase</keyword>
<keyword id="KW-0540">Nuclease</keyword>
<keyword id="KW-0694">RNA-binding</keyword>
<gene>
    <name evidence="2" type="primary">rnb</name>
    <name type="ordered locus">Spro_2638</name>
</gene>
<comment type="function">
    <text evidence="2">Involved in mRNA degradation. Hydrolyzes single-stranded polyribonucleotides processively in the 3' to 5' direction.</text>
</comment>
<comment type="catalytic activity">
    <reaction evidence="2">
        <text>Exonucleolytic cleavage in the 3'- to 5'-direction to yield nucleoside 5'-phosphates.</text>
        <dbReference type="EC" id="3.1.13.1"/>
    </reaction>
</comment>
<comment type="subcellular location">
    <subcellularLocation>
        <location evidence="2">Cytoplasm</location>
    </subcellularLocation>
</comment>
<comment type="similarity">
    <text evidence="2">Belongs to the RNR ribonuclease family. RNase II subfamily.</text>
</comment>